<dbReference type="EMBL" id="AC058785">
    <property type="protein sequence ID" value="AAG51510.1"/>
    <property type="status" value="ALT_SEQ"/>
    <property type="molecule type" value="Genomic_DNA"/>
</dbReference>
<dbReference type="EMBL" id="AC069159">
    <property type="protein sequence ID" value="AAG50902.1"/>
    <property type="status" value="ALT_SEQ"/>
    <property type="molecule type" value="Genomic_DNA"/>
</dbReference>
<dbReference type="EMBL" id="CP002684">
    <property type="protein sequence ID" value="AEE33382.1"/>
    <property type="molecule type" value="Genomic_DNA"/>
</dbReference>
<dbReference type="PIR" id="E96605">
    <property type="entry name" value="E96605"/>
</dbReference>
<dbReference type="RefSeq" id="NP_176032.2">
    <property type="nucleotide sequence ID" value="NM_104515.4"/>
</dbReference>
<dbReference type="SMR" id="F4I532"/>
<dbReference type="FunCoup" id="F4I532">
    <property type="interactions" value="489"/>
</dbReference>
<dbReference type="STRING" id="3702.F4I532"/>
<dbReference type="PaxDb" id="3702-AT1G56350.1"/>
<dbReference type="ProteomicsDB" id="234872"/>
<dbReference type="EnsemblPlants" id="AT1G56350.1">
    <property type="protein sequence ID" value="AT1G56350.1"/>
    <property type="gene ID" value="AT1G56350"/>
</dbReference>
<dbReference type="GeneID" id="842089"/>
<dbReference type="Gramene" id="AT1G56350.1">
    <property type="protein sequence ID" value="AT1G56350.1"/>
    <property type="gene ID" value="AT1G56350"/>
</dbReference>
<dbReference type="KEGG" id="ath:AT1G56350"/>
<dbReference type="Araport" id="AT1G56350"/>
<dbReference type="TAIR" id="AT1G56350"/>
<dbReference type="eggNOG" id="KOG2726">
    <property type="taxonomic scope" value="Eukaryota"/>
</dbReference>
<dbReference type="HOGENOM" id="CLU_036856_2_1_1"/>
<dbReference type="InParanoid" id="F4I532"/>
<dbReference type="OMA" id="LNKADLW"/>
<dbReference type="PRO" id="PR:F4I532"/>
<dbReference type="Proteomes" id="UP000006548">
    <property type="component" value="Chromosome 1"/>
</dbReference>
<dbReference type="ExpressionAtlas" id="F4I532">
    <property type="expression patterns" value="baseline and differential"/>
</dbReference>
<dbReference type="GO" id="GO:0009570">
    <property type="term" value="C:chloroplast stroma"/>
    <property type="evidence" value="ECO:0007669"/>
    <property type="project" value="UniProtKB-SubCell"/>
</dbReference>
<dbReference type="GO" id="GO:0016149">
    <property type="term" value="F:translation release factor activity, codon specific"/>
    <property type="evidence" value="ECO:0007669"/>
    <property type="project" value="InterPro"/>
</dbReference>
<dbReference type="FunFam" id="3.30.160.20:FF:000004">
    <property type="entry name" value="Peptide chain release factor 1"/>
    <property type="match status" value="1"/>
</dbReference>
<dbReference type="Gene3D" id="3.30.160.20">
    <property type="match status" value="1"/>
</dbReference>
<dbReference type="Gene3D" id="3.30.70.1660">
    <property type="match status" value="1"/>
</dbReference>
<dbReference type="Gene3D" id="1.20.58.410">
    <property type="entry name" value="Release factor"/>
    <property type="match status" value="1"/>
</dbReference>
<dbReference type="HAMAP" id="MF_00094">
    <property type="entry name" value="Rel_fac_2"/>
    <property type="match status" value="1"/>
</dbReference>
<dbReference type="InterPro" id="IPR005139">
    <property type="entry name" value="PCRF"/>
</dbReference>
<dbReference type="InterPro" id="IPR000352">
    <property type="entry name" value="Pep_chain_release_fac_I"/>
</dbReference>
<dbReference type="InterPro" id="IPR045853">
    <property type="entry name" value="Pep_chain_release_fac_I_sf"/>
</dbReference>
<dbReference type="InterPro" id="IPR004374">
    <property type="entry name" value="PrfB"/>
</dbReference>
<dbReference type="NCBIfam" id="TIGR00020">
    <property type="entry name" value="prfB"/>
    <property type="match status" value="1"/>
</dbReference>
<dbReference type="PANTHER" id="PTHR43116:SF3">
    <property type="entry name" value="CLASS I PEPTIDE CHAIN RELEASE FACTOR"/>
    <property type="match status" value="1"/>
</dbReference>
<dbReference type="PANTHER" id="PTHR43116">
    <property type="entry name" value="PEPTIDE CHAIN RELEASE FACTOR 2"/>
    <property type="match status" value="1"/>
</dbReference>
<dbReference type="Pfam" id="PF03462">
    <property type="entry name" value="PCRF"/>
    <property type="match status" value="1"/>
</dbReference>
<dbReference type="Pfam" id="PF00472">
    <property type="entry name" value="RF-1"/>
    <property type="match status" value="1"/>
</dbReference>
<dbReference type="SMART" id="SM00937">
    <property type="entry name" value="PCRF"/>
    <property type="match status" value="1"/>
</dbReference>
<dbReference type="SUPFAM" id="SSF75620">
    <property type="entry name" value="Release factor"/>
    <property type="match status" value="1"/>
</dbReference>
<name>PRFB2_ARATH</name>
<sequence length="482" mass="53427">MLSLIIRRSRSRFIIHGIKISCNSLSAVDSSSSVLVSRRTFSSTPALSYFGFNYGKISNLNQRFGNYAYSGSSFASSTRSLSSEAVAVAATCDGLTVERIIANQWPILDENEGDWKSHAAAIAQSIQVIKRRLQWKKLLVRLKVLSAELNKSDLWDDPTHAGKISREHGSLTGKMKGVMTFERELLEHIDMLKLAKEENDSELESETLKALIDMRRVSKEKELEALLSADNDPCSCYIEVQAGAGGTESNDWAAMVMEMYKTWAQRRKFSVTVVDEAPGEIAGIKRATIKVNGEYAYGYAKAEVGVHRLVRISPFDSGKRRHTSFAAVAVIPILGDGSTRVEINDSDLRIERFRSGGAGGQHANTTDSAVRIVHIPTGITATCQNERSQHSNKASAMAVLQSRLDQLEMARQTAMNAQHTQSLTEISWGNQIRTYVLHPYRMVKDLRTNYEVSDPDSVLEGDLDGFILSFLSSSLDKDDPEH</sequence>
<evidence type="ECO:0000250" key="1">
    <source>
        <dbReference type="UniProtKB" id="Q9LVY0"/>
    </source>
</evidence>
<evidence type="ECO:0000255" key="2"/>
<evidence type="ECO:0000303" key="3">
    <source>
    </source>
</evidence>
<evidence type="ECO:0000305" key="4"/>
<evidence type="ECO:0000312" key="5">
    <source>
        <dbReference type="Araport" id="AT1G56350"/>
    </source>
</evidence>
<evidence type="ECO:0000312" key="6">
    <source>
        <dbReference type="EMBL" id="AAG50902.1"/>
    </source>
</evidence>
<evidence type="ECO:0000312" key="7">
    <source>
        <dbReference type="EMBL" id="AAG51510.1"/>
    </source>
</evidence>
<keyword id="KW-0150">Chloroplast</keyword>
<keyword id="KW-0934">Plastid</keyword>
<keyword id="KW-0648">Protein biosynthesis</keyword>
<keyword id="KW-1185">Reference proteome</keyword>
<keyword id="KW-0809">Transit peptide</keyword>
<organism>
    <name type="scientific">Arabidopsis thaliana</name>
    <name type="common">Mouse-ear cress</name>
    <dbReference type="NCBI Taxonomy" id="3702"/>
    <lineage>
        <taxon>Eukaryota</taxon>
        <taxon>Viridiplantae</taxon>
        <taxon>Streptophyta</taxon>
        <taxon>Embryophyta</taxon>
        <taxon>Tracheophyta</taxon>
        <taxon>Spermatophyta</taxon>
        <taxon>Magnoliopsida</taxon>
        <taxon>eudicotyledons</taxon>
        <taxon>Gunneridae</taxon>
        <taxon>Pentapetalae</taxon>
        <taxon>rosids</taxon>
        <taxon>malvids</taxon>
        <taxon>Brassicales</taxon>
        <taxon>Brassicaceae</taxon>
        <taxon>Camelineae</taxon>
        <taxon>Arabidopsis</taxon>
    </lineage>
</organism>
<feature type="transit peptide" description="Chloroplast" evidence="2">
    <location>
        <begin position="1"/>
        <end position="21"/>
    </location>
</feature>
<feature type="chain" id="PRO_0000430965" description="Peptide chain release factor PrfB2, chloroplastic" evidence="2">
    <location>
        <begin position="22"/>
        <end position="482"/>
    </location>
</feature>
<reference key="1">
    <citation type="journal article" date="2000" name="Nature">
        <title>Sequence and analysis of chromosome 1 of the plant Arabidopsis thaliana.</title>
        <authorList>
            <person name="Theologis A."/>
            <person name="Ecker J.R."/>
            <person name="Palm C.J."/>
            <person name="Federspiel N.A."/>
            <person name="Kaul S."/>
            <person name="White O."/>
            <person name="Alonso J."/>
            <person name="Altafi H."/>
            <person name="Araujo R."/>
            <person name="Bowman C.L."/>
            <person name="Brooks S.Y."/>
            <person name="Buehler E."/>
            <person name="Chan A."/>
            <person name="Chao Q."/>
            <person name="Chen H."/>
            <person name="Cheuk R.F."/>
            <person name="Chin C.W."/>
            <person name="Chung M.K."/>
            <person name="Conn L."/>
            <person name="Conway A.B."/>
            <person name="Conway A.R."/>
            <person name="Creasy T.H."/>
            <person name="Dewar K."/>
            <person name="Dunn P."/>
            <person name="Etgu P."/>
            <person name="Feldblyum T.V."/>
            <person name="Feng J.-D."/>
            <person name="Fong B."/>
            <person name="Fujii C.Y."/>
            <person name="Gill J.E."/>
            <person name="Goldsmith A.D."/>
            <person name="Haas B."/>
            <person name="Hansen N.F."/>
            <person name="Hughes B."/>
            <person name="Huizar L."/>
            <person name="Hunter J.L."/>
            <person name="Jenkins J."/>
            <person name="Johnson-Hopson C."/>
            <person name="Khan S."/>
            <person name="Khaykin E."/>
            <person name="Kim C.J."/>
            <person name="Koo H.L."/>
            <person name="Kremenetskaia I."/>
            <person name="Kurtz D.B."/>
            <person name="Kwan A."/>
            <person name="Lam B."/>
            <person name="Langin-Hooper S."/>
            <person name="Lee A."/>
            <person name="Lee J.M."/>
            <person name="Lenz C.A."/>
            <person name="Li J.H."/>
            <person name="Li Y.-P."/>
            <person name="Lin X."/>
            <person name="Liu S.X."/>
            <person name="Liu Z.A."/>
            <person name="Luros J.S."/>
            <person name="Maiti R."/>
            <person name="Marziali A."/>
            <person name="Militscher J."/>
            <person name="Miranda M."/>
            <person name="Nguyen M."/>
            <person name="Nierman W.C."/>
            <person name="Osborne B.I."/>
            <person name="Pai G."/>
            <person name="Peterson J."/>
            <person name="Pham P.K."/>
            <person name="Rizzo M."/>
            <person name="Rooney T."/>
            <person name="Rowley D."/>
            <person name="Sakano H."/>
            <person name="Salzberg S.L."/>
            <person name="Schwartz J.R."/>
            <person name="Shinn P."/>
            <person name="Southwick A.M."/>
            <person name="Sun H."/>
            <person name="Tallon L.J."/>
            <person name="Tambunga G."/>
            <person name="Toriumi M.J."/>
            <person name="Town C.D."/>
            <person name="Utterback T."/>
            <person name="Van Aken S."/>
            <person name="Vaysberg M."/>
            <person name="Vysotskaia V.S."/>
            <person name="Walker M."/>
            <person name="Wu D."/>
            <person name="Yu G."/>
            <person name="Fraser C.M."/>
            <person name="Venter J.C."/>
            <person name="Davis R.W."/>
        </authorList>
    </citation>
    <scope>NUCLEOTIDE SEQUENCE [LARGE SCALE GENOMIC DNA]</scope>
    <source>
        <strain>cv. Columbia</strain>
    </source>
</reference>
<reference key="2">
    <citation type="journal article" date="2017" name="Plant J.">
        <title>Araport11: a complete reannotation of the Arabidopsis thaliana reference genome.</title>
        <authorList>
            <person name="Cheng C.Y."/>
            <person name="Krishnakumar V."/>
            <person name="Chan A.P."/>
            <person name="Thibaud-Nissen F."/>
            <person name="Schobel S."/>
            <person name="Town C.D."/>
        </authorList>
    </citation>
    <scope>GENOME REANNOTATION</scope>
    <source>
        <strain>cv. Columbia</strain>
    </source>
</reference>
<reference key="3">
    <citation type="journal article" date="2011" name="Plant Cell">
        <title>Recruitment of a ribosomal release factor for light- and stress-dependent regulation of petB transcript stability in Arabidopsis chloroplasts.</title>
        <authorList>
            <person name="Stoppel R."/>
            <person name="Lezhneva L."/>
            <person name="Schwenkert S."/>
            <person name="Torabi S."/>
            <person name="Felder S."/>
            <person name="Meierhoff K."/>
            <person name="Westhoff P."/>
            <person name="Meurer J."/>
        </authorList>
    </citation>
    <scope>NOMENCLATURE</scope>
</reference>
<proteinExistence type="inferred from homology"/>
<gene>
    <name evidence="3" type="primary">PRFB2</name>
    <name evidence="5" type="ordered locus">At1g56350</name>
    <name evidence="7" type="ORF">F13N6.6</name>
    <name evidence="6" type="ORF">F14G9.3</name>
</gene>
<accession>F4I532</accession>
<accession>Q9C7K9</accession>
<accession>Q9C7X9</accession>
<comment type="function">
    <text evidence="1">Directs the termination of translation in response to the peptide chain termination codon UGA. Required for the proper translation, stability and normal processing of UGA-containing polycistronic transcripts in chloroplasts.</text>
</comment>
<comment type="subcellular location">
    <subcellularLocation>
        <location evidence="1">Plastid</location>
        <location evidence="1">Chloroplast stroma</location>
    </subcellularLocation>
</comment>
<comment type="similarity">
    <text evidence="4">Belongs to the prokaryotic/mitochondrial release factor family.</text>
</comment>
<comment type="sequence caution" evidence="4">
    <conflict type="erroneous gene model prediction">
        <sequence resource="EMBL-CDS" id="AAG50902"/>
    </conflict>
</comment>
<comment type="sequence caution" evidence="4">
    <conflict type="erroneous gene model prediction">
        <sequence resource="EMBL-CDS" id="AAG51510"/>
    </conflict>
</comment>
<protein>
    <recommendedName>
        <fullName evidence="3">Peptide chain release factor PrfB2, chloroplastic</fullName>
        <shortName evidence="3">AtPrfB2</shortName>
    </recommendedName>
</protein>